<sequence length="110" mass="11740">MSGPTIAAEGVTNPPIDELLTKTDSKYKLVLYSAKRARQINAYYSQLGEGLLEYVGPLVDTHVQEKPLSIALREINEDLLTCEDVDPAELAAEEAAAQAAAADAGSSFSE</sequence>
<feature type="chain" id="PRO_1000005967" description="DNA-directed RNA polymerase subunit omega">
    <location>
        <begin position="1"/>
        <end position="110"/>
    </location>
</feature>
<proteinExistence type="inferred from homology"/>
<organism>
    <name type="scientific">Nocardioides sp. (strain ATCC BAA-499 / JS614)</name>
    <dbReference type="NCBI Taxonomy" id="196162"/>
    <lineage>
        <taxon>Bacteria</taxon>
        <taxon>Bacillati</taxon>
        <taxon>Actinomycetota</taxon>
        <taxon>Actinomycetes</taxon>
        <taxon>Propionibacteriales</taxon>
        <taxon>Nocardioidaceae</taxon>
        <taxon>Nocardioides</taxon>
    </lineage>
</organism>
<comment type="function">
    <text evidence="1">Promotes RNA polymerase assembly. Latches the N- and C-terminal regions of the beta' subunit thereby facilitating its interaction with the beta and alpha subunits.</text>
</comment>
<comment type="catalytic activity">
    <reaction evidence="1">
        <text>RNA(n) + a ribonucleoside 5'-triphosphate = RNA(n+1) + diphosphate</text>
        <dbReference type="Rhea" id="RHEA:21248"/>
        <dbReference type="Rhea" id="RHEA-COMP:14527"/>
        <dbReference type="Rhea" id="RHEA-COMP:17342"/>
        <dbReference type="ChEBI" id="CHEBI:33019"/>
        <dbReference type="ChEBI" id="CHEBI:61557"/>
        <dbReference type="ChEBI" id="CHEBI:140395"/>
        <dbReference type="EC" id="2.7.7.6"/>
    </reaction>
</comment>
<comment type="subunit">
    <text evidence="1">The RNAP catalytic core consists of 2 alpha, 1 beta, 1 beta' and 1 omega subunit. When a sigma factor is associated with the core the holoenzyme is formed, which can initiate transcription.</text>
</comment>
<comment type="similarity">
    <text evidence="1">Belongs to the RNA polymerase subunit omega family.</text>
</comment>
<name>RPOZ_NOCSJ</name>
<accession>A1SJF7</accession>
<dbReference type="EC" id="2.7.7.6" evidence="1"/>
<dbReference type="EMBL" id="CP000509">
    <property type="protein sequence ID" value="ABL81942.1"/>
    <property type="molecule type" value="Genomic_DNA"/>
</dbReference>
<dbReference type="RefSeq" id="WP_011755883.1">
    <property type="nucleotide sequence ID" value="NC_008699.1"/>
</dbReference>
<dbReference type="SMR" id="A1SJF7"/>
<dbReference type="STRING" id="196162.Noca_2437"/>
<dbReference type="KEGG" id="nca:Noca_2437"/>
<dbReference type="eggNOG" id="COG1758">
    <property type="taxonomic scope" value="Bacteria"/>
</dbReference>
<dbReference type="HOGENOM" id="CLU_125406_1_0_11"/>
<dbReference type="OrthoDB" id="8481372at2"/>
<dbReference type="Proteomes" id="UP000000640">
    <property type="component" value="Chromosome"/>
</dbReference>
<dbReference type="GO" id="GO:0000428">
    <property type="term" value="C:DNA-directed RNA polymerase complex"/>
    <property type="evidence" value="ECO:0007669"/>
    <property type="project" value="UniProtKB-KW"/>
</dbReference>
<dbReference type="GO" id="GO:0003677">
    <property type="term" value="F:DNA binding"/>
    <property type="evidence" value="ECO:0007669"/>
    <property type="project" value="UniProtKB-UniRule"/>
</dbReference>
<dbReference type="GO" id="GO:0003899">
    <property type="term" value="F:DNA-directed RNA polymerase activity"/>
    <property type="evidence" value="ECO:0007669"/>
    <property type="project" value="UniProtKB-UniRule"/>
</dbReference>
<dbReference type="GO" id="GO:0006351">
    <property type="term" value="P:DNA-templated transcription"/>
    <property type="evidence" value="ECO:0007669"/>
    <property type="project" value="UniProtKB-UniRule"/>
</dbReference>
<dbReference type="Gene3D" id="3.90.940.10">
    <property type="match status" value="1"/>
</dbReference>
<dbReference type="HAMAP" id="MF_00366">
    <property type="entry name" value="RNApol_bact_RpoZ"/>
    <property type="match status" value="1"/>
</dbReference>
<dbReference type="InterPro" id="IPR003716">
    <property type="entry name" value="DNA-dir_RNA_pol_omega"/>
</dbReference>
<dbReference type="InterPro" id="IPR006110">
    <property type="entry name" value="Pol_omega/Rpo6/RPB6"/>
</dbReference>
<dbReference type="InterPro" id="IPR036161">
    <property type="entry name" value="RPB6/omega-like_sf"/>
</dbReference>
<dbReference type="NCBIfam" id="TIGR00690">
    <property type="entry name" value="rpoZ"/>
    <property type="match status" value="1"/>
</dbReference>
<dbReference type="PANTHER" id="PTHR34476">
    <property type="entry name" value="DNA-DIRECTED RNA POLYMERASE SUBUNIT OMEGA"/>
    <property type="match status" value="1"/>
</dbReference>
<dbReference type="PANTHER" id="PTHR34476:SF1">
    <property type="entry name" value="DNA-DIRECTED RNA POLYMERASE SUBUNIT OMEGA"/>
    <property type="match status" value="1"/>
</dbReference>
<dbReference type="Pfam" id="PF01192">
    <property type="entry name" value="RNA_pol_Rpb6"/>
    <property type="match status" value="1"/>
</dbReference>
<dbReference type="SMART" id="SM01409">
    <property type="entry name" value="RNA_pol_Rpb6"/>
    <property type="match status" value="1"/>
</dbReference>
<dbReference type="SUPFAM" id="SSF63562">
    <property type="entry name" value="RPB6/omega subunit-like"/>
    <property type="match status" value="1"/>
</dbReference>
<reference key="1">
    <citation type="submission" date="2006-12" db="EMBL/GenBank/DDBJ databases">
        <title>Complete sequence of chromosome 1 of Nocardioides sp. JS614.</title>
        <authorList>
            <person name="Copeland A."/>
            <person name="Lucas S."/>
            <person name="Lapidus A."/>
            <person name="Barry K."/>
            <person name="Detter J.C."/>
            <person name="Glavina del Rio T."/>
            <person name="Hammon N."/>
            <person name="Israni S."/>
            <person name="Dalin E."/>
            <person name="Tice H."/>
            <person name="Pitluck S."/>
            <person name="Thompson L.S."/>
            <person name="Brettin T."/>
            <person name="Bruce D."/>
            <person name="Han C."/>
            <person name="Tapia R."/>
            <person name="Schmutz J."/>
            <person name="Larimer F."/>
            <person name="Land M."/>
            <person name="Hauser L."/>
            <person name="Kyrpides N."/>
            <person name="Kim E."/>
            <person name="Mattes T."/>
            <person name="Gossett J."/>
            <person name="Richardson P."/>
        </authorList>
    </citation>
    <scope>NUCLEOTIDE SEQUENCE [LARGE SCALE GENOMIC DNA]</scope>
    <source>
        <strain>ATCC BAA-499 / JS614</strain>
    </source>
</reference>
<keyword id="KW-0240">DNA-directed RNA polymerase</keyword>
<keyword id="KW-0548">Nucleotidyltransferase</keyword>
<keyword id="KW-1185">Reference proteome</keyword>
<keyword id="KW-0804">Transcription</keyword>
<keyword id="KW-0808">Transferase</keyword>
<protein>
    <recommendedName>
        <fullName evidence="1">DNA-directed RNA polymerase subunit omega</fullName>
        <shortName evidence="1">RNAP omega subunit</shortName>
        <ecNumber evidence="1">2.7.7.6</ecNumber>
    </recommendedName>
    <alternativeName>
        <fullName evidence="1">RNA polymerase omega subunit</fullName>
    </alternativeName>
    <alternativeName>
        <fullName evidence="1">Transcriptase subunit omega</fullName>
    </alternativeName>
</protein>
<gene>
    <name evidence="1" type="primary">rpoZ</name>
    <name type="ordered locus">Noca_2437</name>
</gene>
<evidence type="ECO:0000255" key="1">
    <source>
        <dbReference type="HAMAP-Rule" id="MF_00366"/>
    </source>
</evidence>